<proteinExistence type="inferred from homology"/>
<evidence type="ECO:0000255" key="1">
    <source>
        <dbReference type="HAMAP-Rule" id="MF_01103"/>
    </source>
</evidence>
<gene>
    <name type="ordered locus">Clos_1191</name>
</gene>
<name>Y1191_ALKOO</name>
<reference key="1">
    <citation type="submission" date="2007-10" db="EMBL/GenBank/DDBJ databases">
        <title>Complete genome of Alkaliphilus oremlandii OhILAs.</title>
        <authorList>
            <person name="Copeland A."/>
            <person name="Lucas S."/>
            <person name="Lapidus A."/>
            <person name="Barry K."/>
            <person name="Detter J.C."/>
            <person name="Glavina del Rio T."/>
            <person name="Hammon N."/>
            <person name="Israni S."/>
            <person name="Dalin E."/>
            <person name="Tice H."/>
            <person name="Pitluck S."/>
            <person name="Chain P."/>
            <person name="Malfatti S."/>
            <person name="Shin M."/>
            <person name="Vergez L."/>
            <person name="Schmutz J."/>
            <person name="Larimer F."/>
            <person name="Land M."/>
            <person name="Hauser L."/>
            <person name="Kyrpides N."/>
            <person name="Mikhailova N."/>
            <person name="Stolz J.F."/>
            <person name="Dawson A."/>
            <person name="Fisher E."/>
            <person name="Crable B."/>
            <person name="Perera E."/>
            <person name="Lisak J."/>
            <person name="Ranganathan M."/>
            <person name="Basu P."/>
            <person name="Richardson P."/>
        </authorList>
    </citation>
    <scope>NUCLEOTIDE SEQUENCE [LARGE SCALE GENOMIC DNA]</scope>
    <source>
        <strain>OhILAs</strain>
    </source>
</reference>
<comment type="subcellular location">
    <subcellularLocation>
        <location evidence="1">Cytoplasm</location>
    </subcellularLocation>
</comment>
<comment type="similarity">
    <text evidence="1">Belongs to the UPF0291 family.</text>
</comment>
<dbReference type="EMBL" id="CP000853">
    <property type="protein sequence ID" value="ABW18737.1"/>
    <property type="molecule type" value="Genomic_DNA"/>
</dbReference>
<dbReference type="RefSeq" id="WP_012159049.1">
    <property type="nucleotide sequence ID" value="NC_009922.1"/>
</dbReference>
<dbReference type="SMR" id="A8MF68"/>
<dbReference type="STRING" id="350688.Clos_1191"/>
<dbReference type="KEGG" id="aoe:Clos_1191"/>
<dbReference type="eggNOG" id="COG4224">
    <property type="taxonomic scope" value="Bacteria"/>
</dbReference>
<dbReference type="HOGENOM" id="CLU_173137_3_2_9"/>
<dbReference type="OrthoDB" id="390105at2"/>
<dbReference type="Proteomes" id="UP000000269">
    <property type="component" value="Chromosome"/>
</dbReference>
<dbReference type="GO" id="GO:0005737">
    <property type="term" value="C:cytoplasm"/>
    <property type="evidence" value="ECO:0007669"/>
    <property type="project" value="UniProtKB-SubCell"/>
</dbReference>
<dbReference type="Gene3D" id="1.10.287.540">
    <property type="entry name" value="Helix hairpin bin"/>
    <property type="match status" value="1"/>
</dbReference>
<dbReference type="HAMAP" id="MF_01103">
    <property type="entry name" value="UPF0291"/>
    <property type="match status" value="1"/>
</dbReference>
<dbReference type="InterPro" id="IPR009242">
    <property type="entry name" value="DUF896"/>
</dbReference>
<dbReference type="PANTHER" id="PTHR37300">
    <property type="entry name" value="UPF0291 PROTEIN CBO2609/CLC_2481"/>
    <property type="match status" value="1"/>
</dbReference>
<dbReference type="PANTHER" id="PTHR37300:SF1">
    <property type="entry name" value="UPF0291 PROTEIN YNZC"/>
    <property type="match status" value="1"/>
</dbReference>
<dbReference type="Pfam" id="PF05979">
    <property type="entry name" value="DUF896"/>
    <property type="match status" value="1"/>
</dbReference>
<dbReference type="SUPFAM" id="SSF158221">
    <property type="entry name" value="YnzC-like"/>
    <property type="match status" value="1"/>
</dbReference>
<feature type="chain" id="PRO_1000065018" description="UPF0291 protein Clos_1191">
    <location>
        <begin position="1"/>
        <end position="56"/>
    </location>
</feature>
<keyword id="KW-0963">Cytoplasm</keyword>
<keyword id="KW-1185">Reference proteome</keyword>
<organism>
    <name type="scientific">Alkaliphilus oremlandii (strain OhILAs)</name>
    <name type="common">Clostridium oremlandii (strain OhILAs)</name>
    <dbReference type="NCBI Taxonomy" id="350688"/>
    <lineage>
        <taxon>Bacteria</taxon>
        <taxon>Bacillati</taxon>
        <taxon>Bacillota</taxon>
        <taxon>Clostridia</taxon>
        <taxon>Peptostreptococcales</taxon>
        <taxon>Natronincolaceae</taxon>
        <taxon>Alkaliphilus</taxon>
    </lineage>
</organism>
<sequence length="56" mass="6833">MVSKEKINRINELARIAKERVLTKLEEEEQQILRKEYIEAFRKSFRKQLDNIELVD</sequence>
<accession>A8MF68</accession>
<protein>
    <recommendedName>
        <fullName evidence="1">UPF0291 protein Clos_1191</fullName>
    </recommendedName>
</protein>